<sequence>MNTEATHDQNEAQTTGVRLRNAREQLGLSQQAVAERLCLKVSTVRDIEEDKAPSDLASTFLRGYIRSYARLVHVPEEELLPGLEKQAPLRAAKVAPMQSFSLGKRRKKRDGWLMSFTWLVLFVVVGLTGAWWWQNHKAQQEEITTMADQSTAELNADKDSGQSVPLDTGAATSQDTTPAQTAPAPATPVDSTAATQTPAPTAAATQNTVVAPSQANVDTAATSAAPAATETPSALPTSQAGVAAPAADPNALVMNFTADCWLEVTDATGKKLFSGMQRKDGNLNLTGQAPYKLKIGAPAAVQIQYQGKPVDLSRFIRTNQVARLTLNAEPTPAQ</sequence>
<keyword id="KW-0997">Cell inner membrane</keyword>
<keyword id="KW-1003">Cell membrane</keyword>
<keyword id="KW-0133">Cell shape</keyword>
<keyword id="KW-0238">DNA-binding</keyword>
<keyword id="KW-0472">Membrane</keyword>
<keyword id="KW-1185">Reference proteome</keyword>
<keyword id="KW-0735">Signal-anchor</keyword>
<keyword id="KW-0812">Transmembrane</keyword>
<keyword id="KW-1133">Transmembrane helix</keyword>
<accession>Q8ZN53</accession>
<feature type="chain" id="PRO_0000361860" description="Cytoskeleton protein RodZ">
    <location>
        <begin position="1"/>
        <end position="334"/>
    </location>
</feature>
<feature type="topological domain" description="Cytoplasmic" evidence="1">
    <location>
        <begin position="1"/>
        <end position="111"/>
    </location>
</feature>
<feature type="transmembrane region" description="Helical; Signal-anchor for type II membrane protein" evidence="1">
    <location>
        <begin position="112"/>
        <end position="132"/>
    </location>
</feature>
<feature type="topological domain" description="Periplasmic" evidence="1">
    <location>
        <begin position="133"/>
        <end position="334"/>
    </location>
</feature>
<feature type="domain" description="HTH cro/C1-type" evidence="1">
    <location>
        <begin position="19"/>
        <end position="71"/>
    </location>
</feature>
<feature type="DNA-binding region" description="H-T-H motif" evidence="1">
    <location>
        <begin position="30"/>
        <end position="49"/>
    </location>
</feature>
<feature type="region of interest" description="Disordered" evidence="2">
    <location>
        <begin position="155"/>
        <end position="241"/>
    </location>
</feature>
<feature type="compositionally biased region" description="Low complexity" evidence="2">
    <location>
        <begin position="170"/>
        <end position="211"/>
    </location>
</feature>
<feature type="compositionally biased region" description="Low complexity" evidence="2">
    <location>
        <begin position="219"/>
        <end position="241"/>
    </location>
</feature>
<proteinExistence type="inferred from homology"/>
<comment type="function">
    <text evidence="1">Cytoskeletal protein that is involved in cell-shape control through regulation of the length of the long axis.</text>
</comment>
<comment type="subcellular location">
    <subcellularLocation>
        <location evidence="1">Cell inner membrane</location>
        <topology evidence="1">Single-pass type II membrane protein</topology>
    </subcellularLocation>
    <text evidence="1">Forms helical filaments along the long axis of the cell.</text>
</comment>
<comment type="domain">
    <text evidence="1">The helix-turn-helix (HTH) motif in the cytoplasmic domain of the N-terminus is involved in the formation of spirals to maintain the rigid rod shape. As this protein is anchored in the cytoplasmic membrane, the HTH motif may contribute to protein-protein interactions to form the RodZ helix, which is localized beneath the cytoplasmic membrane. The C-terminal domain may be critical for determination of the rod shape by probably interacting with enzymes required for synthesis of the peptidoglycan layer, including PBPs in the periplasm.</text>
</comment>
<comment type="similarity">
    <text evidence="1">Belongs to the RodZ family.</text>
</comment>
<evidence type="ECO:0000255" key="1">
    <source>
        <dbReference type="HAMAP-Rule" id="MF_02017"/>
    </source>
</evidence>
<evidence type="ECO:0000256" key="2">
    <source>
        <dbReference type="SAM" id="MobiDB-lite"/>
    </source>
</evidence>
<name>RODZ_SALTY</name>
<dbReference type="EMBL" id="AE006468">
    <property type="protein sequence ID" value="AAL21418.1"/>
    <property type="molecule type" value="Genomic_DNA"/>
</dbReference>
<dbReference type="RefSeq" id="WP_001090890.1">
    <property type="nucleotide sequence ID" value="NC_003197.2"/>
</dbReference>
<dbReference type="SMR" id="Q8ZN53"/>
<dbReference type="STRING" id="99287.STM2524"/>
<dbReference type="PaxDb" id="99287-STM2524"/>
<dbReference type="KEGG" id="stm:STM2524"/>
<dbReference type="PATRIC" id="fig|99287.12.peg.2661"/>
<dbReference type="HOGENOM" id="CLU_047530_3_1_6"/>
<dbReference type="OMA" id="ADCWTQV"/>
<dbReference type="PhylomeDB" id="Q8ZN53"/>
<dbReference type="BioCyc" id="SENT99287:STM2524-MONOMER"/>
<dbReference type="Proteomes" id="UP000001014">
    <property type="component" value="Chromosome"/>
</dbReference>
<dbReference type="GO" id="GO:0005886">
    <property type="term" value="C:plasma membrane"/>
    <property type="evidence" value="ECO:0000318"/>
    <property type="project" value="GO_Central"/>
</dbReference>
<dbReference type="GO" id="GO:0003677">
    <property type="term" value="F:DNA binding"/>
    <property type="evidence" value="ECO:0007669"/>
    <property type="project" value="UniProtKB-KW"/>
</dbReference>
<dbReference type="GO" id="GO:0008360">
    <property type="term" value="P:regulation of cell shape"/>
    <property type="evidence" value="ECO:0007669"/>
    <property type="project" value="UniProtKB-UniRule"/>
</dbReference>
<dbReference type="CDD" id="cd00093">
    <property type="entry name" value="HTH_XRE"/>
    <property type="match status" value="1"/>
</dbReference>
<dbReference type="FunFam" id="1.10.260.40:FF:000014">
    <property type="entry name" value="Cytoskeleton protein RodZ"/>
    <property type="match status" value="1"/>
</dbReference>
<dbReference type="Gene3D" id="1.10.260.40">
    <property type="entry name" value="lambda repressor-like DNA-binding domains"/>
    <property type="match status" value="1"/>
</dbReference>
<dbReference type="HAMAP" id="MF_02017">
    <property type="entry name" value="RodZ"/>
    <property type="match status" value="1"/>
</dbReference>
<dbReference type="InterPro" id="IPR050400">
    <property type="entry name" value="Bact_Cytoskel_RodZ"/>
</dbReference>
<dbReference type="InterPro" id="IPR001387">
    <property type="entry name" value="Cro/C1-type_HTH"/>
</dbReference>
<dbReference type="InterPro" id="IPR010982">
    <property type="entry name" value="Lambda_DNA-bd_dom_sf"/>
</dbReference>
<dbReference type="InterPro" id="IPR023690">
    <property type="entry name" value="RodZ"/>
</dbReference>
<dbReference type="InterPro" id="IPR025194">
    <property type="entry name" value="RodZ-like_C"/>
</dbReference>
<dbReference type="NCBIfam" id="NF008109">
    <property type="entry name" value="PRK10856.1"/>
    <property type="match status" value="1"/>
</dbReference>
<dbReference type="PANTHER" id="PTHR34475">
    <property type="match status" value="1"/>
</dbReference>
<dbReference type="PANTHER" id="PTHR34475:SF1">
    <property type="entry name" value="CYTOSKELETON PROTEIN RODZ"/>
    <property type="match status" value="1"/>
</dbReference>
<dbReference type="Pfam" id="PF13413">
    <property type="entry name" value="HTH_25"/>
    <property type="match status" value="1"/>
</dbReference>
<dbReference type="Pfam" id="PF13464">
    <property type="entry name" value="RodZ_C"/>
    <property type="match status" value="1"/>
</dbReference>
<dbReference type="SMART" id="SM00530">
    <property type="entry name" value="HTH_XRE"/>
    <property type="match status" value="1"/>
</dbReference>
<dbReference type="SUPFAM" id="SSF47413">
    <property type="entry name" value="lambda repressor-like DNA-binding domains"/>
    <property type="match status" value="1"/>
</dbReference>
<dbReference type="PROSITE" id="PS50943">
    <property type="entry name" value="HTH_CROC1"/>
    <property type="match status" value="1"/>
</dbReference>
<protein>
    <recommendedName>
        <fullName evidence="1">Cytoskeleton protein RodZ</fullName>
    </recommendedName>
</protein>
<reference key="1">
    <citation type="journal article" date="2001" name="Nature">
        <title>Complete genome sequence of Salmonella enterica serovar Typhimurium LT2.</title>
        <authorList>
            <person name="McClelland M."/>
            <person name="Sanderson K.E."/>
            <person name="Spieth J."/>
            <person name="Clifton S.W."/>
            <person name="Latreille P."/>
            <person name="Courtney L."/>
            <person name="Porwollik S."/>
            <person name="Ali J."/>
            <person name="Dante M."/>
            <person name="Du F."/>
            <person name="Hou S."/>
            <person name="Layman D."/>
            <person name="Leonard S."/>
            <person name="Nguyen C."/>
            <person name="Scott K."/>
            <person name="Holmes A."/>
            <person name="Grewal N."/>
            <person name="Mulvaney E."/>
            <person name="Ryan E."/>
            <person name="Sun H."/>
            <person name="Florea L."/>
            <person name="Miller W."/>
            <person name="Stoneking T."/>
            <person name="Nhan M."/>
            <person name="Waterston R."/>
            <person name="Wilson R.K."/>
        </authorList>
    </citation>
    <scope>NUCLEOTIDE SEQUENCE [LARGE SCALE GENOMIC DNA]</scope>
    <source>
        <strain>LT2 / SGSC1412 / ATCC 700720</strain>
    </source>
</reference>
<gene>
    <name evidence="1" type="primary">rodZ</name>
    <name type="ordered locus">STM2524</name>
</gene>
<organism>
    <name type="scientific">Salmonella typhimurium (strain LT2 / SGSC1412 / ATCC 700720)</name>
    <dbReference type="NCBI Taxonomy" id="99287"/>
    <lineage>
        <taxon>Bacteria</taxon>
        <taxon>Pseudomonadati</taxon>
        <taxon>Pseudomonadota</taxon>
        <taxon>Gammaproteobacteria</taxon>
        <taxon>Enterobacterales</taxon>
        <taxon>Enterobacteriaceae</taxon>
        <taxon>Salmonella</taxon>
    </lineage>
</organism>